<name>DEOC_MYCBO</name>
<gene>
    <name evidence="1" type="primary">deoC</name>
    <name type="ordered locus">BQ2027_MB0488</name>
</gene>
<protein>
    <recommendedName>
        <fullName evidence="1">Deoxyribose-phosphate aldolase</fullName>
        <shortName evidence="1">DERA</shortName>
        <ecNumber evidence="1">4.1.2.4</ecNumber>
    </recommendedName>
    <alternativeName>
        <fullName evidence="1">2-deoxy-D-ribose 5-phosphate aldolase</fullName>
    </alternativeName>
    <alternativeName>
        <fullName evidence="1">Phosphodeoxyriboaldolase</fullName>
        <shortName evidence="1">Deoxyriboaldolase</shortName>
    </alternativeName>
</protein>
<evidence type="ECO:0000255" key="1">
    <source>
        <dbReference type="HAMAP-Rule" id="MF_00114"/>
    </source>
</evidence>
<evidence type="ECO:0000305" key="2"/>
<keyword id="KW-0963">Cytoplasm</keyword>
<keyword id="KW-0456">Lyase</keyword>
<keyword id="KW-1185">Reference proteome</keyword>
<keyword id="KW-0704">Schiff base</keyword>
<feature type="chain" id="PRO_0000057249" description="Deoxyribose-phosphate aldolase">
    <location>
        <begin position="1"/>
        <end position="224"/>
    </location>
</feature>
<feature type="active site" description="Proton donor/acceptor" evidence="1">
    <location>
        <position position="93"/>
    </location>
</feature>
<feature type="active site" description="Schiff-base intermediate with acetaldehyde" evidence="1">
    <location>
        <position position="159"/>
    </location>
</feature>
<feature type="active site" description="Proton donor/acceptor" evidence="1">
    <location>
        <position position="189"/>
    </location>
</feature>
<reference key="1">
    <citation type="journal article" date="2003" name="Proc. Natl. Acad. Sci. U.S.A.">
        <title>The complete genome sequence of Mycobacterium bovis.</title>
        <authorList>
            <person name="Garnier T."/>
            <person name="Eiglmeier K."/>
            <person name="Camus J.-C."/>
            <person name="Medina N."/>
            <person name="Mansoor H."/>
            <person name="Pryor M."/>
            <person name="Duthoy S."/>
            <person name="Grondin S."/>
            <person name="Lacroix C."/>
            <person name="Monsempe C."/>
            <person name="Simon S."/>
            <person name="Harris B."/>
            <person name="Atkin R."/>
            <person name="Doggett J."/>
            <person name="Mayes R."/>
            <person name="Keating L."/>
            <person name="Wheeler P.R."/>
            <person name="Parkhill J."/>
            <person name="Barrell B.G."/>
            <person name="Cole S.T."/>
            <person name="Gordon S.V."/>
            <person name="Hewinson R.G."/>
        </authorList>
    </citation>
    <scope>NUCLEOTIDE SEQUENCE [LARGE SCALE GENOMIC DNA]</scope>
    <source>
        <strain>ATCC BAA-935 / AF2122/97</strain>
    </source>
</reference>
<reference key="2">
    <citation type="journal article" date="2017" name="Genome Announc.">
        <title>Updated reference genome sequence and annotation of Mycobacterium bovis AF2122/97.</title>
        <authorList>
            <person name="Malone K.M."/>
            <person name="Farrell D."/>
            <person name="Stuber T.P."/>
            <person name="Schubert O.T."/>
            <person name="Aebersold R."/>
            <person name="Robbe-Austerman S."/>
            <person name="Gordon S.V."/>
        </authorList>
    </citation>
    <scope>NUCLEOTIDE SEQUENCE [LARGE SCALE GENOMIC DNA]</scope>
    <scope>GENOME REANNOTATION</scope>
    <source>
        <strain>ATCC BAA-935 / AF2122/97</strain>
    </source>
</reference>
<organism>
    <name type="scientific">Mycobacterium bovis (strain ATCC BAA-935 / AF2122/97)</name>
    <dbReference type="NCBI Taxonomy" id="233413"/>
    <lineage>
        <taxon>Bacteria</taxon>
        <taxon>Bacillati</taxon>
        <taxon>Actinomycetota</taxon>
        <taxon>Actinomycetes</taxon>
        <taxon>Mycobacteriales</taxon>
        <taxon>Mycobacteriaceae</taxon>
        <taxon>Mycobacterium</taxon>
        <taxon>Mycobacterium tuberculosis complex</taxon>
    </lineage>
</organism>
<accession>P63930</accession>
<accession>A0A1R3XWI3</accession>
<accession>Q11138</accession>
<accession>X2BF23</accession>
<sequence>MLGQPTRAQLAALVDHTLLKPETTRADVAALVAEAAELGVYAVCVSPSMVPVAVQAGGVRVAAVTGFPSGKHVSSVKAHEAAAALASGASEIDMVIDIGAALCGDIDAVRSDIEAVRAAAAGAVLKVIVESAVLLGQSNAHTLVDACRAAEDAGADFVKTSTGCHPAGGATVRAVELMAETVGPRLGVKASGGIRTAADAVAMLNAGATRLGLSGTRAVLDGLS</sequence>
<comment type="function">
    <text evidence="1">Catalyzes a reversible aldol reaction between acetaldehyde and D-glyceraldehyde 3-phosphate to generate 2-deoxy-D-ribose 5-phosphate.</text>
</comment>
<comment type="catalytic activity">
    <reaction evidence="1">
        <text>2-deoxy-D-ribose 5-phosphate = D-glyceraldehyde 3-phosphate + acetaldehyde</text>
        <dbReference type="Rhea" id="RHEA:12821"/>
        <dbReference type="ChEBI" id="CHEBI:15343"/>
        <dbReference type="ChEBI" id="CHEBI:59776"/>
        <dbReference type="ChEBI" id="CHEBI:62877"/>
        <dbReference type="EC" id="4.1.2.4"/>
    </reaction>
</comment>
<comment type="pathway">
    <text evidence="1">Carbohydrate degradation; 2-deoxy-D-ribose 1-phosphate degradation; D-glyceraldehyde 3-phosphate and acetaldehyde from 2-deoxy-alpha-D-ribose 1-phosphate: step 2/2.</text>
</comment>
<comment type="subcellular location">
    <subcellularLocation>
        <location evidence="1">Cytoplasm</location>
    </subcellularLocation>
</comment>
<comment type="similarity">
    <text evidence="1 2">Belongs to the DeoC/FbaB aldolase family. DeoC type 1 subfamily.</text>
</comment>
<proteinExistence type="inferred from homology"/>
<dbReference type="EC" id="4.1.2.4" evidence="1"/>
<dbReference type="EMBL" id="LT708304">
    <property type="protein sequence ID" value="SIT99083.1"/>
    <property type="molecule type" value="Genomic_DNA"/>
</dbReference>
<dbReference type="RefSeq" id="NP_854151.1">
    <property type="nucleotide sequence ID" value="NC_002945.3"/>
</dbReference>
<dbReference type="RefSeq" id="WP_003402347.1">
    <property type="nucleotide sequence ID" value="NC_002945.4"/>
</dbReference>
<dbReference type="SMR" id="P63930"/>
<dbReference type="PATRIC" id="fig|233413.5.peg.530"/>
<dbReference type="UniPathway" id="UPA00002">
    <property type="reaction ID" value="UER00468"/>
</dbReference>
<dbReference type="Proteomes" id="UP000001419">
    <property type="component" value="Chromosome"/>
</dbReference>
<dbReference type="GO" id="GO:0005737">
    <property type="term" value="C:cytoplasm"/>
    <property type="evidence" value="ECO:0007669"/>
    <property type="project" value="UniProtKB-SubCell"/>
</dbReference>
<dbReference type="GO" id="GO:0004139">
    <property type="term" value="F:deoxyribose-phosphate aldolase activity"/>
    <property type="evidence" value="ECO:0007669"/>
    <property type="project" value="UniProtKB-UniRule"/>
</dbReference>
<dbReference type="GO" id="GO:0006018">
    <property type="term" value="P:2-deoxyribose 1-phosphate catabolic process"/>
    <property type="evidence" value="ECO:0007669"/>
    <property type="project" value="UniProtKB-UniRule"/>
</dbReference>
<dbReference type="GO" id="GO:0016052">
    <property type="term" value="P:carbohydrate catabolic process"/>
    <property type="evidence" value="ECO:0007669"/>
    <property type="project" value="TreeGrafter"/>
</dbReference>
<dbReference type="GO" id="GO:0009264">
    <property type="term" value="P:deoxyribonucleotide catabolic process"/>
    <property type="evidence" value="ECO:0007669"/>
    <property type="project" value="InterPro"/>
</dbReference>
<dbReference type="CDD" id="cd00959">
    <property type="entry name" value="DeoC"/>
    <property type="match status" value="1"/>
</dbReference>
<dbReference type="FunFam" id="3.20.20.70:FF:000044">
    <property type="entry name" value="Deoxyribose-phosphate aldolase"/>
    <property type="match status" value="1"/>
</dbReference>
<dbReference type="Gene3D" id="3.20.20.70">
    <property type="entry name" value="Aldolase class I"/>
    <property type="match status" value="1"/>
</dbReference>
<dbReference type="HAMAP" id="MF_00114">
    <property type="entry name" value="DeoC_type1"/>
    <property type="match status" value="1"/>
</dbReference>
<dbReference type="InterPro" id="IPR013785">
    <property type="entry name" value="Aldolase_TIM"/>
</dbReference>
<dbReference type="InterPro" id="IPR011343">
    <property type="entry name" value="DeoC"/>
</dbReference>
<dbReference type="InterPro" id="IPR002915">
    <property type="entry name" value="DeoC/FbaB/LacD_aldolase"/>
</dbReference>
<dbReference type="InterPro" id="IPR028581">
    <property type="entry name" value="DeoC_typeI"/>
</dbReference>
<dbReference type="NCBIfam" id="TIGR00126">
    <property type="entry name" value="deoC"/>
    <property type="match status" value="1"/>
</dbReference>
<dbReference type="PANTHER" id="PTHR10889">
    <property type="entry name" value="DEOXYRIBOSE-PHOSPHATE ALDOLASE"/>
    <property type="match status" value="1"/>
</dbReference>
<dbReference type="PANTHER" id="PTHR10889:SF1">
    <property type="entry name" value="DEOXYRIBOSE-PHOSPHATE ALDOLASE"/>
    <property type="match status" value="1"/>
</dbReference>
<dbReference type="Pfam" id="PF01791">
    <property type="entry name" value="DeoC"/>
    <property type="match status" value="1"/>
</dbReference>
<dbReference type="PIRSF" id="PIRSF001357">
    <property type="entry name" value="DeoC"/>
    <property type="match status" value="1"/>
</dbReference>
<dbReference type="SMART" id="SM01133">
    <property type="entry name" value="DeoC"/>
    <property type="match status" value="1"/>
</dbReference>
<dbReference type="SUPFAM" id="SSF51569">
    <property type="entry name" value="Aldolase"/>
    <property type="match status" value="1"/>
</dbReference>